<comment type="function">
    <text evidence="1">Catalyzes the transfer of an acyl group from acyl-phosphate (acyl-PO(4)) to glycerol-3-phosphate (G3P) to form lysophosphatidic acid (LPA). This enzyme utilizes acyl-phosphate as fatty acyl donor, but not acyl-CoA or acyl-ACP.</text>
</comment>
<comment type="catalytic activity">
    <reaction evidence="1">
        <text>an acyl phosphate + sn-glycerol 3-phosphate = a 1-acyl-sn-glycero-3-phosphate + phosphate</text>
        <dbReference type="Rhea" id="RHEA:34075"/>
        <dbReference type="ChEBI" id="CHEBI:43474"/>
        <dbReference type="ChEBI" id="CHEBI:57597"/>
        <dbReference type="ChEBI" id="CHEBI:57970"/>
        <dbReference type="ChEBI" id="CHEBI:59918"/>
        <dbReference type="EC" id="2.3.1.275"/>
    </reaction>
</comment>
<comment type="pathway">
    <text evidence="1">Lipid metabolism; phospholipid metabolism.</text>
</comment>
<comment type="subunit">
    <text evidence="1">Probably interacts with PlsX.</text>
</comment>
<comment type="subcellular location">
    <subcellularLocation>
        <location evidence="1">Cell membrane</location>
        <topology evidence="1">Multi-pass membrane protein</topology>
    </subcellularLocation>
</comment>
<comment type="similarity">
    <text evidence="1">Belongs to the PlsY family.</text>
</comment>
<accession>Q5WGU3</accession>
<dbReference type="EC" id="2.3.1.275" evidence="1"/>
<dbReference type="EMBL" id="AP006627">
    <property type="protein sequence ID" value="BAD64412.1"/>
    <property type="molecule type" value="Genomic_DNA"/>
</dbReference>
<dbReference type="RefSeq" id="WP_011246720.1">
    <property type="nucleotide sequence ID" value="NC_006582.1"/>
</dbReference>
<dbReference type="SMR" id="Q5WGU3"/>
<dbReference type="STRING" id="66692.ABC1877"/>
<dbReference type="KEGG" id="bcl:ABC1877"/>
<dbReference type="eggNOG" id="COG0344">
    <property type="taxonomic scope" value="Bacteria"/>
</dbReference>
<dbReference type="HOGENOM" id="CLU_081254_7_1_9"/>
<dbReference type="OrthoDB" id="9777124at2"/>
<dbReference type="UniPathway" id="UPA00085"/>
<dbReference type="Proteomes" id="UP000001168">
    <property type="component" value="Chromosome"/>
</dbReference>
<dbReference type="GO" id="GO:0005886">
    <property type="term" value="C:plasma membrane"/>
    <property type="evidence" value="ECO:0007669"/>
    <property type="project" value="UniProtKB-SubCell"/>
</dbReference>
<dbReference type="GO" id="GO:0043772">
    <property type="term" value="F:acyl-phosphate glycerol-3-phosphate acyltransferase activity"/>
    <property type="evidence" value="ECO:0007669"/>
    <property type="project" value="UniProtKB-UniRule"/>
</dbReference>
<dbReference type="GO" id="GO:0008654">
    <property type="term" value="P:phospholipid biosynthetic process"/>
    <property type="evidence" value="ECO:0007669"/>
    <property type="project" value="UniProtKB-UniRule"/>
</dbReference>
<dbReference type="HAMAP" id="MF_01043">
    <property type="entry name" value="PlsY"/>
    <property type="match status" value="1"/>
</dbReference>
<dbReference type="InterPro" id="IPR003811">
    <property type="entry name" value="G3P_acylTferase_PlsY"/>
</dbReference>
<dbReference type="NCBIfam" id="TIGR00023">
    <property type="entry name" value="glycerol-3-phosphate 1-O-acyltransferase PlsY"/>
    <property type="match status" value="1"/>
</dbReference>
<dbReference type="PANTHER" id="PTHR30309:SF0">
    <property type="entry name" value="GLYCEROL-3-PHOSPHATE ACYLTRANSFERASE-RELATED"/>
    <property type="match status" value="1"/>
</dbReference>
<dbReference type="PANTHER" id="PTHR30309">
    <property type="entry name" value="INNER MEMBRANE PROTEIN YGIH"/>
    <property type="match status" value="1"/>
</dbReference>
<dbReference type="Pfam" id="PF02660">
    <property type="entry name" value="G3P_acyltransf"/>
    <property type="match status" value="1"/>
</dbReference>
<dbReference type="SMART" id="SM01207">
    <property type="entry name" value="G3P_acyltransf"/>
    <property type="match status" value="1"/>
</dbReference>
<evidence type="ECO:0000255" key="1">
    <source>
        <dbReference type="HAMAP-Rule" id="MF_01043"/>
    </source>
</evidence>
<name>PLSY_SHOC1</name>
<feature type="chain" id="PRO_0000188323" description="Glycerol-3-phosphate acyltransferase">
    <location>
        <begin position="1"/>
        <end position="205"/>
    </location>
</feature>
<feature type="transmembrane region" description="Helical" evidence="1">
    <location>
        <begin position="5"/>
        <end position="25"/>
    </location>
</feature>
<feature type="transmembrane region" description="Helical" evidence="1">
    <location>
        <begin position="56"/>
        <end position="76"/>
    </location>
</feature>
<feature type="transmembrane region" description="Helical" evidence="1">
    <location>
        <begin position="84"/>
        <end position="104"/>
    </location>
</feature>
<feature type="transmembrane region" description="Helical" evidence="1">
    <location>
        <begin position="114"/>
        <end position="134"/>
    </location>
</feature>
<feature type="transmembrane region" description="Helical" evidence="1">
    <location>
        <begin position="144"/>
        <end position="164"/>
    </location>
</feature>
<feature type="transmembrane region" description="Helical" evidence="1">
    <location>
        <begin position="165"/>
        <end position="185"/>
    </location>
</feature>
<protein>
    <recommendedName>
        <fullName evidence="1">Glycerol-3-phosphate acyltransferase</fullName>
    </recommendedName>
    <alternativeName>
        <fullName evidence="1">Acyl-PO4 G3P acyltransferase</fullName>
    </alternativeName>
    <alternativeName>
        <fullName evidence="1">Acyl-phosphate--glycerol-3-phosphate acyltransferase</fullName>
    </alternativeName>
    <alternativeName>
        <fullName evidence="1">G3P acyltransferase</fullName>
        <shortName evidence="1">GPAT</shortName>
        <ecNumber evidence="1">2.3.1.275</ecNumber>
    </alternativeName>
    <alternativeName>
        <fullName evidence="1">Lysophosphatidic acid synthase</fullName>
        <shortName evidence="1">LPA synthase</shortName>
    </alternativeName>
</protein>
<sequence>MIVSLIATVLFGYLLGSVSFSYIIAKKIKKIDIRSEGSGNAGATNTLRVLGIGPAICVLLLDVAKGVAPALLAIALTNGDYPLVPALAGLAAILGHNWPIYFGFRGGKGVATSIGVVATLLFLPALCAGIVAILSIVFTKYVSLGSLLFAVLTPIAALIMLPFFHYPLEYIYLAVLLAILSLWRHRTNMGRLIAGTENKLGKKHA</sequence>
<reference key="1">
    <citation type="submission" date="2003-10" db="EMBL/GenBank/DDBJ databases">
        <title>The complete genome sequence of the alkaliphilic Bacillus clausii KSM-K16.</title>
        <authorList>
            <person name="Takaki Y."/>
            <person name="Kageyama Y."/>
            <person name="Shimamura S."/>
            <person name="Suzuki H."/>
            <person name="Nishi S."/>
            <person name="Hatada Y."/>
            <person name="Kawai S."/>
            <person name="Ito S."/>
            <person name="Horikoshi K."/>
        </authorList>
    </citation>
    <scope>NUCLEOTIDE SEQUENCE [LARGE SCALE GENOMIC DNA]</scope>
    <source>
        <strain>KSM-K16</strain>
    </source>
</reference>
<organism>
    <name type="scientific">Shouchella clausii (strain KSM-K16)</name>
    <name type="common">Alkalihalobacillus clausii</name>
    <dbReference type="NCBI Taxonomy" id="66692"/>
    <lineage>
        <taxon>Bacteria</taxon>
        <taxon>Bacillati</taxon>
        <taxon>Bacillota</taxon>
        <taxon>Bacilli</taxon>
        <taxon>Bacillales</taxon>
        <taxon>Bacillaceae</taxon>
        <taxon>Shouchella</taxon>
    </lineage>
</organism>
<proteinExistence type="inferred from homology"/>
<keyword id="KW-1003">Cell membrane</keyword>
<keyword id="KW-0444">Lipid biosynthesis</keyword>
<keyword id="KW-0443">Lipid metabolism</keyword>
<keyword id="KW-0472">Membrane</keyword>
<keyword id="KW-0594">Phospholipid biosynthesis</keyword>
<keyword id="KW-1208">Phospholipid metabolism</keyword>
<keyword id="KW-1185">Reference proteome</keyword>
<keyword id="KW-0808">Transferase</keyword>
<keyword id="KW-0812">Transmembrane</keyword>
<keyword id="KW-1133">Transmembrane helix</keyword>
<gene>
    <name evidence="1" type="primary">plsY</name>
    <name type="ordered locus">ABC1877</name>
</gene>